<reference key="1">
    <citation type="journal article" date="2003" name="Nature">
        <title>Genome divergence in two Prochlorococcus ecotypes reflects oceanic niche differentiation.</title>
        <authorList>
            <person name="Rocap G."/>
            <person name="Larimer F.W."/>
            <person name="Lamerdin J.E."/>
            <person name="Malfatti S."/>
            <person name="Chain P."/>
            <person name="Ahlgren N.A."/>
            <person name="Arellano A."/>
            <person name="Coleman M."/>
            <person name="Hauser L."/>
            <person name="Hess W.R."/>
            <person name="Johnson Z.I."/>
            <person name="Land M.L."/>
            <person name="Lindell D."/>
            <person name="Post A.F."/>
            <person name="Regala W."/>
            <person name="Shah M."/>
            <person name="Shaw S.L."/>
            <person name="Steglich C."/>
            <person name="Sullivan M.B."/>
            <person name="Ting C.S."/>
            <person name="Tolonen A."/>
            <person name="Webb E.A."/>
            <person name="Zinser E.R."/>
            <person name="Chisholm S.W."/>
        </authorList>
    </citation>
    <scope>NUCLEOTIDE SEQUENCE [LARGE SCALE GENOMIC DNA]</scope>
    <source>
        <strain>CCMP1986 / NIES-2087 / MED4</strain>
    </source>
</reference>
<evidence type="ECO:0000250" key="1"/>
<evidence type="ECO:0000305" key="2"/>
<sequence>MEILNELISTYKDHPKEGIDFKDVLEIVQHPIVFKELILKMASSKIVSNAEALISIDARGFIFGSAISFQVSKPMIFARKPGKLPGELIKKKYTLEYGENSLSIQKKSLNNFYSFAIIDDLLATGGTVNCVSNILKDNGKKITGLLTVVELIELEGRSKFDFPVESWLKCK</sequence>
<dbReference type="EC" id="2.4.2.7"/>
<dbReference type="EMBL" id="BX548174">
    <property type="protein sequence ID" value="CAE19581.1"/>
    <property type="molecule type" value="Genomic_DNA"/>
</dbReference>
<dbReference type="RefSeq" id="WP_011132755.1">
    <property type="nucleotide sequence ID" value="NC_005072.1"/>
</dbReference>
<dbReference type="SMR" id="Q7V0X5"/>
<dbReference type="STRING" id="59919.PMM1122"/>
<dbReference type="KEGG" id="pmm:PMM1122"/>
<dbReference type="eggNOG" id="COG0503">
    <property type="taxonomic scope" value="Bacteria"/>
</dbReference>
<dbReference type="HOGENOM" id="CLU_063339_3_3_3"/>
<dbReference type="OrthoDB" id="9803963at2"/>
<dbReference type="UniPathway" id="UPA00588">
    <property type="reaction ID" value="UER00646"/>
</dbReference>
<dbReference type="Proteomes" id="UP000001026">
    <property type="component" value="Chromosome"/>
</dbReference>
<dbReference type="GO" id="GO:0005737">
    <property type="term" value="C:cytoplasm"/>
    <property type="evidence" value="ECO:0007669"/>
    <property type="project" value="UniProtKB-SubCell"/>
</dbReference>
<dbReference type="GO" id="GO:0002055">
    <property type="term" value="F:adenine binding"/>
    <property type="evidence" value="ECO:0007669"/>
    <property type="project" value="TreeGrafter"/>
</dbReference>
<dbReference type="GO" id="GO:0003999">
    <property type="term" value="F:adenine phosphoribosyltransferase activity"/>
    <property type="evidence" value="ECO:0007669"/>
    <property type="project" value="UniProtKB-UniRule"/>
</dbReference>
<dbReference type="GO" id="GO:0016208">
    <property type="term" value="F:AMP binding"/>
    <property type="evidence" value="ECO:0007669"/>
    <property type="project" value="TreeGrafter"/>
</dbReference>
<dbReference type="GO" id="GO:0006168">
    <property type="term" value="P:adenine salvage"/>
    <property type="evidence" value="ECO:0007669"/>
    <property type="project" value="InterPro"/>
</dbReference>
<dbReference type="GO" id="GO:0044209">
    <property type="term" value="P:AMP salvage"/>
    <property type="evidence" value="ECO:0007669"/>
    <property type="project" value="UniProtKB-UniRule"/>
</dbReference>
<dbReference type="GO" id="GO:0006166">
    <property type="term" value="P:purine ribonucleoside salvage"/>
    <property type="evidence" value="ECO:0007669"/>
    <property type="project" value="UniProtKB-KW"/>
</dbReference>
<dbReference type="CDD" id="cd06223">
    <property type="entry name" value="PRTases_typeI"/>
    <property type="match status" value="1"/>
</dbReference>
<dbReference type="FunFam" id="3.40.50.2020:FF:000004">
    <property type="entry name" value="Adenine phosphoribosyltransferase"/>
    <property type="match status" value="1"/>
</dbReference>
<dbReference type="Gene3D" id="3.40.50.2020">
    <property type="match status" value="1"/>
</dbReference>
<dbReference type="InterPro" id="IPR005764">
    <property type="entry name" value="Ade_phspho_trans"/>
</dbReference>
<dbReference type="InterPro" id="IPR000836">
    <property type="entry name" value="PRibTrfase_dom"/>
</dbReference>
<dbReference type="InterPro" id="IPR029057">
    <property type="entry name" value="PRTase-like"/>
</dbReference>
<dbReference type="InterPro" id="IPR050054">
    <property type="entry name" value="UPRTase/APRTase"/>
</dbReference>
<dbReference type="NCBIfam" id="NF002636">
    <property type="entry name" value="PRK02304.1-5"/>
    <property type="match status" value="1"/>
</dbReference>
<dbReference type="PANTHER" id="PTHR32315">
    <property type="entry name" value="ADENINE PHOSPHORIBOSYLTRANSFERASE"/>
    <property type="match status" value="1"/>
</dbReference>
<dbReference type="PANTHER" id="PTHR32315:SF3">
    <property type="entry name" value="ADENINE PHOSPHORIBOSYLTRANSFERASE"/>
    <property type="match status" value="1"/>
</dbReference>
<dbReference type="SUPFAM" id="SSF53271">
    <property type="entry name" value="PRTase-like"/>
    <property type="match status" value="1"/>
</dbReference>
<keyword id="KW-0963">Cytoplasm</keyword>
<keyword id="KW-0328">Glycosyltransferase</keyword>
<keyword id="KW-0660">Purine salvage</keyword>
<keyword id="KW-0808">Transferase</keyword>
<comment type="function">
    <text evidence="1">Catalyzes a salvage reaction resulting in the formation of AMP, that is energically less costly than de novo synthesis.</text>
</comment>
<comment type="catalytic activity">
    <reaction>
        <text>AMP + diphosphate = 5-phospho-alpha-D-ribose 1-diphosphate + adenine</text>
        <dbReference type="Rhea" id="RHEA:16609"/>
        <dbReference type="ChEBI" id="CHEBI:16708"/>
        <dbReference type="ChEBI" id="CHEBI:33019"/>
        <dbReference type="ChEBI" id="CHEBI:58017"/>
        <dbReference type="ChEBI" id="CHEBI:456215"/>
        <dbReference type="EC" id="2.4.2.7"/>
    </reaction>
</comment>
<comment type="pathway">
    <text>Purine metabolism; AMP biosynthesis via salvage pathway; AMP from adenine: step 1/1.</text>
</comment>
<comment type="subunit">
    <text evidence="1">Homodimer.</text>
</comment>
<comment type="subcellular location">
    <subcellularLocation>
        <location evidence="1">Cytoplasm</location>
    </subcellularLocation>
</comment>
<comment type="similarity">
    <text evidence="2">Belongs to the purine/pyrimidine phosphoribosyltransferase family.</text>
</comment>
<name>APT_PROMP</name>
<feature type="chain" id="PRO_0000149432" description="Adenine phosphoribosyltransferase">
    <location>
        <begin position="1"/>
        <end position="171"/>
    </location>
</feature>
<proteinExistence type="inferred from homology"/>
<organism>
    <name type="scientific">Prochlorococcus marinus subsp. pastoris (strain CCMP1986 / NIES-2087 / MED4)</name>
    <dbReference type="NCBI Taxonomy" id="59919"/>
    <lineage>
        <taxon>Bacteria</taxon>
        <taxon>Bacillati</taxon>
        <taxon>Cyanobacteriota</taxon>
        <taxon>Cyanophyceae</taxon>
        <taxon>Synechococcales</taxon>
        <taxon>Prochlorococcaceae</taxon>
        <taxon>Prochlorococcus</taxon>
    </lineage>
</organism>
<gene>
    <name type="primary">apt</name>
    <name type="ordered locus">PMM1122</name>
</gene>
<protein>
    <recommendedName>
        <fullName>Adenine phosphoribosyltransferase</fullName>
        <shortName>APRT</shortName>
        <ecNumber>2.4.2.7</ecNumber>
    </recommendedName>
</protein>
<accession>Q7V0X5</accession>